<evidence type="ECO:0000255" key="1">
    <source>
        <dbReference type="HAMAP-Rule" id="MF_00804"/>
    </source>
</evidence>
<feature type="chain" id="PRO_1000133949" description="Betaine aldehyde dehydrogenase">
    <location>
        <begin position="1"/>
        <end position="490"/>
    </location>
</feature>
<feature type="active site" description="Charge relay system" evidence="1">
    <location>
        <position position="162"/>
    </location>
</feature>
<feature type="active site" description="Proton acceptor" evidence="1">
    <location>
        <position position="252"/>
    </location>
</feature>
<feature type="active site" description="Nucleophile" evidence="1">
    <location>
        <position position="286"/>
    </location>
</feature>
<feature type="active site" description="Charge relay system" evidence="1">
    <location>
        <position position="464"/>
    </location>
</feature>
<feature type="binding site" evidence="1">
    <location>
        <position position="26"/>
    </location>
    <ligand>
        <name>K(+)</name>
        <dbReference type="ChEBI" id="CHEBI:29103"/>
        <label>1</label>
    </ligand>
</feature>
<feature type="binding site" evidence="1">
    <location>
        <position position="27"/>
    </location>
    <ligand>
        <name>K(+)</name>
        <dbReference type="ChEBI" id="CHEBI:29103"/>
        <label>1</label>
    </ligand>
</feature>
<feature type="binding site" evidence="1">
    <location>
        <position position="93"/>
    </location>
    <ligand>
        <name>K(+)</name>
        <dbReference type="ChEBI" id="CHEBI:29103"/>
        <label>1</label>
    </ligand>
</feature>
<feature type="binding site" evidence="1">
    <location>
        <begin position="150"/>
        <end position="152"/>
    </location>
    <ligand>
        <name>NAD(+)</name>
        <dbReference type="ChEBI" id="CHEBI:57540"/>
    </ligand>
</feature>
<feature type="binding site" evidence="1">
    <location>
        <begin position="176"/>
        <end position="179"/>
    </location>
    <ligand>
        <name>NAD(+)</name>
        <dbReference type="ChEBI" id="CHEBI:57540"/>
    </ligand>
</feature>
<feature type="binding site" evidence="1">
    <location>
        <position position="180"/>
    </location>
    <ligand>
        <name>K(+)</name>
        <dbReference type="ChEBI" id="CHEBI:29103"/>
        <label>1</label>
    </ligand>
</feature>
<feature type="binding site" evidence="1">
    <location>
        <begin position="230"/>
        <end position="233"/>
    </location>
    <ligand>
        <name>NAD(+)</name>
        <dbReference type="ChEBI" id="CHEBI:57540"/>
    </ligand>
</feature>
<feature type="binding site" evidence="1">
    <location>
        <position position="246"/>
    </location>
    <ligand>
        <name>K(+)</name>
        <dbReference type="ChEBI" id="CHEBI:29103"/>
        <label>2</label>
    </ligand>
</feature>
<feature type="binding site" evidence="1">
    <location>
        <position position="254"/>
    </location>
    <ligand>
        <name>NAD(+)</name>
        <dbReference type="ChEBI" id="CHEBI:57540"/>
    </ligand>
</feature>
<feature type="binding site" description="covalent" evidence="1">
    <location>
        <position position="286"/>
    </location>
    <ligand>
        <name>NAD(+)</name>
        <dbReference type="ChEBI" id="CHEBI:57540"/>
    </ligand>
</feature>
<feature type="binding site" evidence="1">
    <location>
        <position position="387"/>
    </location>
    <ligand>
        <name>NAD(+)</name>
        <dbReference type="ChEBI" id="CHEBI:57540"/>
    </ligand>
</feature>
<feature type="binding site" evidence="1">
    <location>
        <position position="457"/>
    </location>
    <ligand>
        <name>K(+)</name>
        <dbReference type="ChEBI" id="CHEBI:29103"/>
        <label>2</label>
    </ligand>
</feature>
<feature type="binding site" evidence="1">
    <location>
        <position position="460"/>
    </location>
    <ligand>
        <name>K(+)</name>
        <dbReference type="ChEBI" id="CHEBI:29103"/>
        <label>2</label>
    </ligand>
</feature>
<feature type="site" description="Seems to be a necessary countercharge to the potassium cations" evidence="1">
    <location>
        <position position="248"/>
    </location>
</feature>
<feature type="modified residue" description="Cysteine sulfenic acid (-SOH)" evidence="1">
    <location>
        <position position="286"/>
    </location>
</feature>
<organism>
    <name type="scientific">Escherichia coli O8 (strain IAI1)</name>
    <dbReference type="NCBI Taxonomy" id="585034"/>
    <lineage>
        <taxon>Bacteria</taxon>
        <taxon>Pseudomonadati</taxon>
        <taxon>Pseudomonadota</taxon>
        <taxon>Gammaproteobacteria</taxon>
        <taxon>Enterobacterales</taxon>
        <taxon>Enterobacteriaceae</taxon>
        <taxon>Escherichia</taxon>
    </lineage>
</organism>
<reference key="1">
    <citation type="journal article" date="2009" name="PLoS Genet.">
        <title>Organised genome dynamics in the Escherichia coli species results in highly diverse adaptive paths.</title>
        <authorList>
            <person name="Touchon M."/>
            <person name="Hoede C."/>
            <person name="Tenaillon O."/>
            <person name="Barbe V."/>
            <person name="Baeriswyl S."/>
            <person name="Bidet P."/>
            <person name="Bingen E."/>
            <person name="Bonacorsi S."/>
            <person name="Bouchier C."/>
            <person name="Bouvet O."/>
            <person name="Calteau A."/>
            <person name="Chiapello H."/>
            <person name="Clermont O."/>
            <person name="Cruveiller S."/>
            <person name="Danchin A."/>
            <person name="Diard M."/>
            <person name="Dossat C."/>
            <person name="Karoui M.E."/>
            <person name="Frapy E."/>
            <person name="Garry L."/>
            <person name="Ghigo J.M."/>
            <person name="Gilles A.M."/>
            <person name="Johnson J."/>
            <person name="Le Bouguenec C."/>
            <person name="Lescat M."/>
            <person name="Mangenot S."/>
            <person name="Martinez-Jehanne V."/>
            <person name="Matic I."/>
            <person name="Nassif X."/>
            <person name="Oztas S."/>
            <person name="Petit M.A."/>
            <person name="Pichon C."/>
            <person name="Rouy Z."/>
            <person name="Ruf C.S."/>
            <person name="Schneider D."/>
            <person name="Tourret J."/>
            <person name="Vacherie B."/>
            <person name="Vallenet D."/>
            <person name="Medigue C."/>
            <person name="Rocha E.P.C."/>
            <person name="Denamur E."/>
        </authorList>
    </citation>
    <scope>NUCLEOTIDE SEQUENCE [LARGE SCALE GENOMIC DNA]</scope>
    <source>
        <strain>IAI1</strain>
    </source>
</reference>
<sequence length="490" mass="52943">MSRMAEQQLYIHGGYTSATSGRTFETINPANGNVLATVQAAGREDVDRAVKSAQQGQKIWAAMTAMERSRILRRAVDILRERNDELAKLETLDTGKAYSETSTVDIVTGADVLEYYAGLIPALEGSQIPLRETLFVYTRREPLGVVAGIGAWNYPIQIALWKSAPALAAGNAMIFKPSEVTPLTALKLAEIYSEAGLPDGVFNVLPGVGAETGQYLTEHPGIAKVSFTGGVASGKKVMANSAASSLKEVTMELGGKSPLIVFDDADLDLAADIAMMANFFSSGQVCTNGTRVFVPAKCKAAFEQKILARVERIRAGDVFDPQTNFGPLVSFPHRDNVLRYIVKGKEEGARVLCGGDVLKGDGLDNGAWVAPTVFTDCSDEMTIVREEIFGPVMSILTYESEEEVIRRANDTDYGLAAGIVTADLNRAHRVIHQLEAGICWINTWGESPAEMPVGGYKHSGIGRENGVMTLQSYTQVKSIQVEMAKFQSIF</sequence>
<gene>
    <name evidence="1" type="primary">betB</name>
    <name type="ordered locus">ECIAI1_0309</name>
</gene>
<accession>B7M2V6</accession>
<comment type="function">
    <text evidence="1">Involved in the biosynthesis of the osmoprotectant glycine betaine. Catalyzes the irreversible oxidation of betaine aldehyde to the corresponding acid.</text>
</comment>
<comment type="catalytic activity">
    <reaction evidence="1">
        <text>betaine aldehyde + NAD(+) + H2O = glycine betaine + NADH + 2 H(+)</text>
        <dbReference type="Rhea" id="RHEA:15305"/>
        <dbReference type="ChEBI" id="CHEBI:15377"/>
        <dbReference type="ChEBI" id="CHEBI:15378"/>
        <dbReference type="ChEBI" id="CHEBI:15710"/>
        <dbReference type="ChEBI" id="CHEBI:17750"/>
        <dbReference type="ChEBI" id="CHEBI:57540"/>
        <dbReference type="ChEBI" id="CHEBI:57945"/>
        <dbReference type="EC" id="1.2.1.8"/>
    </reaction>
    <physiologicalReaction direction="left-to-right" evidence="1">
        <dbReference type="Rhea" id="RHEA:15306"/>
    </physiologicalReaction>
</comment>
<comment type="cofactor">
    <cofactor evidence="1">
        <name>K(+)</name>
        <dbReference type="ChEBI" id="CHEBI:29103"/>
    </cofactor>
    <text evidence="1">Binds 2 potassium ions per subunit.</text>
</comment>
<comment type="pathway">
    <text evidence="1">Amine and polyamine biosynthesis; betaine biosynthesis via choline pathway; betaine from betaine aldehyde: step 1/1.</text>
</comment>
<comment type="subunit">
    <text evidence="1">Dimer of dimers.</text>
</comment>
<comment type="similarity">
    <text evidence="1">Belongs to the aldehyde dehydrogenase family.</text>
</comment>
<name>BETB_ECO8A</name>
<proteinExistence type="inferred from homology"/>
<keyword id="KW-0479">Metal-binding</keyword>
<keyword id="KW-0520">NAD</keyword>
<keyword id="KW-0521">NADP</keyword>
<keyword id="KW-0558">Oxidation</keyword>
<keyword id="KW-0560">Oxidoreductase</keyword>
<keyword id="KW-0630">Potassium</keyword>
<dbReference type="EC" id="1.2.1.8" evidence="1"/>
<dbReference type="EMBL" id="CU928160">
    <property type="protein sequence ID" value="CAQ97183.1"/>
    <property type="molecule type" value="Genomic_DNA"/>
</dbReference>
<dbReference type="RefSeq" id="WP_000089066.1">
    <property type="nucleotide sequence ID" value="NC_011741.1"/>
</dbReference>
<dbReference type="SMR" id="B7M2V6"/>
<dbReference type="KEGG" id="ecr:ECIAI1_0309"/>
<dbReference type="HOGENOM" id="CLU_005391_0_2_6"/>
<dbReference type="UniPathway" id="UPA00529">
    <property type="reaction ID" value="UER00386"/>
</dbReference>
<dbReference type="GO" id="GO:0008802">
    <property type="term" value="F:betaine-aldehyde dehydrogenase (NAD+) activity"/>
    <property type="evidence" value="ECO:0007669"/>
    <property type="project" value="UniProtKB-UniRule"/>
</dbReference>
<dbReference type="GO" id="GO:0046872">
    <property type="term" value="F:metal ion binding"/>
    <property type="evidence" value="ECO:0007669"/>
    <property type="project" value="UniProtKB-KW"/>
</dbReference>
<dbReference type="GO" id="GO:0019285">
    <property type="term" value="P:glycine betaine biosynthetic process from choline"/>
    <property type="evidence" value="ECO:0007669"/>
    <property type="project" value="UniProtKB-UniRule"/>
</dbReference>
<dbReference type="CDD" id="cd07090">
    <property type="entry name" value="ALDH_F9_TMBADH"/>
    <property type="match status" value="1"/>
</dbReference>
<dbReference type="FunFam" id="3.40.309.10:FF:000014">
    <property type="entry name" value="NAD/NADP-dependent betaine aldehyde dehydrogenase"/>
    <property type="match status" value="1"/>
</dbReference>
<dbReference type="FunFam" id="3.40.605.10:FF:000007">
    <property type="entry name" value="NAD/NADP-dependent betaine aldehyde dehydrogenase"/>
    <property type="match status" value="1"/>
</dbReference>
<dbReference type="Gene3D" id="3.40.605.10">
    <property type="entry name" value="Aldehyde Dehydrogenase, Chain A, domain 1"/>
    <property type="match status" value="1"/>
</dbReference>
<dbReference type="Gene3D" id="3.40.309.10">
    <property type="entry name" value="Aldehyde Dehydrogenase, Chain A, domain 2"/>
    <property type="match status" value="1"/>
</dbReference>
<dbReference type="HAMAP" id="MF_00804">
    <property type="entry name" value="BADH"/>
    <property type="match status" value="1"/>
</dbReference>
<dbReference type="InterPro" id="IPR016161">
    <property type="entry name" value="Ald_DH/histidinol_DH"/>
</dbReference>
<dbReference type="InterPro" id="IPR016163">
    <property type="entry name" value="Ald_DH_C"/>
</dbReference>
<dbReference type="InterPro" id="IPR016160">
    <property type="entry name" value="Ald_DH_CS_CYS"/>
</dbReference>
<dbReference type="InterPro" id="IPR029510">
    <property type="entry name" value="Ald_DH_CS_GLU"/>
</dbReference>
<dbReference type="InterPro" id="IPR016162">
    <property type="entry name" value="Ald_DH_N"/>
</dbReference>
<dbReference type="InterPro" id="IPR015590">
    <property type="entry name" value="Aldehyde_DH_dom"/>
</dbReference>
<dbReference type="InterPro" id="IPR011264">
    <property type="entry name" value="BADH"/>
</dbReference>
<dbReference type="NCBIfam" id="TIGR01804">
    <property type="entry name" value="BADH"/>
    <property type="match status" value="1"/>
</dbReference>
<dbReference type="NCBIfam" id="NF009725">
    <property type="entry name" value="PRK13252.1"/>
    <property type="match status" value="1"/>
</dbReference>
<dbReference type="PANTHER" id="PTHR11699">
    <property type="entry name" value="ALDEHYDE DEHYDROGENASE-RELATED"/>
    <property type="match status" value="1"/>
</dbReference>
<dbReference type="Pfam" id="PF00171">
    <property type="entry name" value="Aldedh"/>
    <property type="match status" value="1"/>
</dbReference>
<dbReference type="SUPFAM" id="SSF53720">
    <property type="entry name" value="ALDH-like"/>
    <property type="match status" value="1"/>
</dbReference>
<dbReference type="PROSITE" id="PS00070">
    <property type="entry name" value="ALDEHYDE_DEHYDR_CYS"/>
    <property type="match status" value="1"/>
</dbReference>
<dbReference type="PROSITE" id="PS00687">
    <property type="entry name" value="ALDEHYDE_DEHYDR_GLU"/>
    <property type="match status" value="1"/>
</dbReference>
<protein>
    <recommendedName>
        <fullName evidence="1">Betaine aldehyde dehydrogenase</fullName>
        <shortName evidence="1">BADH</shortName>
        <ecNumber evidence="1">1.2.1.8</ecNumber>
    </recommendedName>
</protein>